<feature type="chain" id="PRO_1000061636" description="UPF0246 protein Sputcn32_1053">
    <location>
        <begin position="1"/>
        <end position="257"/>
    </location>
</feature>
<evidence type="ECO:0000255" key="1">
    <source>
        <dbReference type="HAMAP-Rule" id="MF_00652"/>
    </source>
</evidence>
<sequence length="257" mass="29301">MLILVSPAKTLDFEQPPLTQVYSQPDFLYHSQELIQVCRQLAPSDIATLMKVSDKIAGLNAARFEGWQPQFTLENAKQAIFAFRGDVYTGFDADTLSSQELERAQSQLRILSGLYGLLRPLDLILPYRLEMGTALNNARGKNLYDFWGDILTLAVNKTLTEQGDRIVVNLASNEYFKAIKVRQLDGQLITPVFKDYKNGQYKVISFFAKRARGMMARYIIKQQINSIDELIKFDAAGYYYSEEHSTQSEPTFLREAQ</sequence>
<comment type="similarity">
    <text evidence="1">Belongs to the UPF0246 family.</text>
</comment>
<gene>
    <name type="ordered locus">Sputcn32_1053</name>
</gene>
<dbReference type="EMBL" id="CP000681">
    <property type="protein sequence ID" value="ABP74781.1"/>
    <property type="molecule type" value="Genomic_DNA"/>
</dbReference>
<dbReference type="SMR" id="A4Y498"/>
<dbReference type="STRING" id="319224.Sputcn32_1053"/>
<dbReference type="KEGG" id="spc:Sputcn32_1053"/>
<dbReference type="eggNOG" id="COG3022">
    <property type="taxonomic scope" value="Bacteria"/>
</dbReference>
<dbReference type="HOGENOM" id="CLU_061989_0_0_6"/>
<dbReference type="GO" id="GO:0005829">
    <property type="term" value="C:cytosol"/>
    <property type="evidence" value="ECO:0007669"/>
    <property type="project" value="TreeGrafter"/>
</dbReference>
<dbReference type="GO" id="GO:0033194">
    <property type="term" value="P:response to hydroperoxide"/>
    <property type="evidence" value="ECO:0007669"/>
    <property type="project" value="TreeGrafter"/>
</dbReference>
<dbReference type="HAMAP" id="MF_00652">
    <property type="entry name" value="UPF0246"/>
    <property type="match status" value="1"/>
</dbReference>
<dbReference type="InterPro" id="IPR005583">
    <property type="entry name" value="YaaA"/>
</dbReference>
<dbReference type="NCBIfam" id="NF002541">
    <property type="entry name" value="PRK02101.1-1"/>
    <property type="match status" value="1"/>
</dbReference>
<dbReference type="NCBIfam" id="NF002542">
    <property type="entry name" value="PRK02101.1-3"/>
    <property type="match status" value="1"/>
</dbReference>
<dbReference type="PANTHER" id="PTHR30283:SF4">
    <property type="entry name" value="PEROXIDE STRESS RESISTANCE PROTEIN YAAA"/>
    <property type="match status" value="1"/>
</dbReference>
<dbReference type="PANTHER" id="PTHR30283">
    <property type="entry name" value="PEROXIDE STRESS RESPONSE PROTEIN YAAA"/>
    <property type="match status" value="1"/>
</dbReference>
<dbReference type="Pfam" id="PF03883">
    <property type="entry name" value="H2O2_YaaD"/>
    <property type="match status" value="1"/>
</dbReference>
<reference key="1">
    <citation type="submission" date="2007-04" db="EMBL/GenBank/DDBJ databases">
        <title>Complete sequence of Shewanella putrefaciens CN-32.</title>
        <authorList>
            <consortium name="US DOE Joint Genome Institute"/>
            <person name="Copeland A."/>
            <person name="Lucas S."/>
            <person name="Lapidus A."/>
            <person name="Barry K."/>
            <person name="Detter J.C."/>
            <person name="Glavina del Rio T."/>
            <person name="Hammon N."/>
            <person name="Israni S."/>
            <person name="Dalin E."/>
            <person name="Tice H."/>
            <person name="Pitluck S."/>
            <person name="Chain P."/>
            <person name="Malfatti S."/>
            <person name="Shin M."/>
            <person name="Vergez L."/>
            <person name="Schmutz J."/>
            <person name="Larimer F."/>
            <person name="Land M."/>
            <person name="Hauser L."/>
            <person name="Kyrpides N."/>
            <person name="Mikhailova N."/>
            <person name="Romine M.F."/>
            <person name="Fredrickson J."/>
            <person name="Tiedje J."/>
            <person name="Richardson P."/>
        </authorList>
    </citation>
    <scope>NUCLEOTIDE SEQUENCE [LARGE SCALE GENOMIC DNA]</scope>
    <source>
        <strain>CN-32 / ATCC BAA-453</strain>
    </source>
</reference>
<accession>A4Y498</accession>
<protein>
    <recommendedName>
        <fullName evidence="1">UPF0246 protein Sputcn32_1053</fullName>
    </recommendedName>
</protein>
<name>Y1053_SHEPC</name>
<organism>
    <name type="scientific">Shewanella putrefaciens (strain CN-32 / ATCC BAA-453)</name>
    <dbReference type="NCBI Taxonomy" id="319224"/>
    <lineage>
        <taxon>Bacteria</taxon>
        <taxon>Pseudomonadati</taxon>
        <taxon>Pseudomonadota</taxon>
        <taxon>Gammaproteobacteria</taxon>
        <taxon>Alteromonadales</taxon>
        <taxon>Shewanellaceae</taxon>
        <taxon>Shewanella</taxon>
    </lineage>
</organism>
<proteinExistence type="inferred from homology"/>